<name>RS16_SULNB</name>
<evidence type="ECO:0000255" key="1">
    <source>
        <dbReference type="HAMAP-Rule" id="MF_00385"/>
    </source>
</evidence>
<evidence type="ECO:0000305" key="2"/>
<accession>A6Q769</accession>
<organism>
    <name type="scientific">Sulfurovum sp. (strain NBC37-1)</name>
    <dbReference type="NCBI Taxonomy" id="387093"/>
    <lineage>
        <taxon>Bacteria</taxon>
        <taxon>Pseudomonadati</taxon>
        <taxon>Campylobacterota</taxon>
        <taxon>Epsilonproteobacteria</taxon>
        <taxon>Campylobacterales</taxon>
        <taxon>Sulfurovaceae</taxon>
        <taxon>Sulfurovum</taxon>
    </lineage>
</organism>
<gene>
    <name evidence="1" type="primary">rpsP</name>
    <name type="ordered locus">SUN_0368</name>
</gene>
<sequence>MTMIRMTRMGRKKKPFYRIVVTDSRKRRDGGWIEAIGHYNPVSENKELTLDEERLNYWLSVGAQMSPTVKRLAGKK</sequence>
<proteinExistence type="inferred from homology"/>
<protein>
    <recommendedName>
        <fullName evidence="1">Small ribosomal subunit protein bS16</fullName>
    </recommendedName>
    <alternativeName>
        <fullName evidence="2">30S ribosomal protein S16</fullName>
    </alternativeName>
</protein>
<dbReference type="EMBL" id="AP009179">
    <property type="protein sequence ID" value="BAF71328.1"/>
    <property type="molecule type" value="Genomic_DNA"/>
</dbReference>
<dbReference type="RefSeq" id="WP_011980061.1">
    <property type="nucleotide sequence ID" value="NC_009663.1"/>
</dbReference>
<dbReference type="SMR" id="A6Q769"/>
<dbReference type="STRING" id="387093.SUN_0368"/>
<dbReference type="KEGG" id="sun:SUN_0368"/>
<dbReference type="eggNOG" id="COG0228">
    <property type="taxonomic scope" value="Bacteria"/>
</dbReference>
<dbReference type="HOGENOM" id="CLU_100590_5_1_7"/>
<dbReference type="OrthoDB" id="9807878at2"/>
<dbReference type="Proteomes" id="UP000006378">
    <property type="component" value="Chromosome"/>
</dbReference>
<dbReference type="GO" id="GO:0005737">
    <property type="term" value="C:cytoplasm"/>
    <property type="evidence" value="ECO:0007669"/>
    <property type="project" value="UniProtKB-ARBA"/>
</dbReference>
<dbReference type="GO" id="GO:0015935">
    <property type="term" value="C:small ribosomal subunit"/>
    <property type="evidence" value="ECO:0007669"/>
    <property type="project" value="TreeGrafter"/>
</dbReference>
<dbReference type="GO" id="GO:0003735">
    <property type="term" value="F:structural constituent of ribosome"/>
    <property type="evidence" value="ECO:0007669"/>
    <property type="project" value="InterPro"/>
</dbReference>
<dbReference type="GO" id="GO:0006412">
    <property type="term" value="P:translation"/>
    <property type="evidence" value="ECO:0007669"/>
    <property type="project" value="UniProtKB-UniRule"/>
</dbReference>
<dbReference type="FunFam" id="3.30.1320.10:FF:000005">
    <property type="entry name" value="30S ribosomal protein S16"/>
    <property type="match status" value="1"/>
</dbReference>
<dbReference type="Gene3D" id="3.30.1320.10">
    <property type="match status" value="1"/>
</dbReference>
<dbReference type="HAMAP" id="MF_00385">
    <property type="entry name" value="Ribosomal_bS16"/>
    <property type="match status" value="1"/>
</dbReference>
<dbReference type="InterPro" id="IPR000307">
    <property type="entry name" value="Ribosomal_bS16"/>
</dbReference>
<dbReference type="InterPro" id="IPR023803">
    <property type="entry name" value="Ribosomal_bS16_dom_sf"/>
</dbReference>
<dbReference type="NCBIfam" id="TIGR00002">
    <property type="entry name" value="S16"/>
    <property type="match status" value="1"/>
</dbReference>
<dbReference type="PANTHER" id="PTHR12919">
    <property type="entry name" value="30S RIBOSOMAL PROTEIN S16"/>
    <property type="match status" value="1"/>
</dbReference>
<dbReference type="PANTHER" id="PTHR12919:SF20">
    <property type="entry name" value="SMALL RIBOSOMAL SUBUNIT PROTEIN BS16M"/>
    <property type="match status" value="1"/>
</dbReference>
<dbReference type="Pfam" id="PF00886">
    <property type="entry name" value="Ribosomal_S16"/>
    <property type="match status" value="1"/>
</dbReference>
<dbReference type="SUPFAM" id="SSF54565">
    <property type="entry name" value="Ribosomal protein S16"/>
    <property type="match status" value="1"/>
</dbReference>
<reference key="1">
    <citation type="journal article" date="2007" name="Proc. Natl. Acad. Sci. U.S.A.">
        <title>Deep-sea vent epsilon-proteobacterial genomes provide insights into emergence of pathogens.</title>
        <authorList>
            <person name="Nakagawa S."/>
            <person name="Takaki Y."/>
            <person name="Shimamura S."/>
            <person name="Reysenbach A.-L."/>
            <person name="Takai K."/>
            <person name="Horikoshi K."/>
        </authorList>
    </citation>
    <scope>NUCLEOTIDE SEQUENCE [LARGE SCALE GENOMIC DNA]</scope>
    <source>
        <strain>NBC37-1</strain>
    </source>
</reference>
<feature type="chain" id="PRO_1000049366" description="Small ribosomal subunit protein bS16">
    <location>
        <begin position="1"/>
        <end position="76"/>
    </location>
</feature>
<comment type="similarity">
    <text evidence="1">Belongs to the bacterial ribosomal protein bS16 family.</text>
</comment>
<keyword id="KW-0687">Ribonucleoprotein</keyword>
<keyword id="KW-0689">Ribosomal protein</keyword>